<keyword id="KW-0002">3D-structure</keyword>
<keyword id="KW-0963">Cytoplasm</keyword>
<keyword id="KW-0903">Direct protein sequencing</keyword>
<keyword id="KW-1185">Reference proteome</keyword>
<keyword id="KW-0694">RNA-binding</keyword>
<keyword id="KW-0699">rRNA-binding</keyword>
<keyword id="KW-0346">Stress response</keyword>
<keyword id="KW-0810">Translation regulation</keyword>
<comment type="function">
    <text evidence="1 3 4 5 7 8 12 13 14">During stationary phase, converts 70S ribosomes to an immature dimeric form (90S ribosomes) which are converted to inactive 100S ribosomes (a process called ribosomal hibernation) by the hibernation promoting factor HPF (PubMed:18174192, PubMed:7677746). Inactivates ribosomes by covering the peptidyl transferase (PTase) center of the 23S rRNA and the entrance of peptide exit tunnel (PubMed:12473202, PubMed:15066119). However crystallization with T.thermophilus 70S ribosomes shows it binds near the 3'-end of the 16S rRNA near the anti-Shine-Dalgarno sequence, where it would sterically hinder translation initiation (PubMed:22605777). In this crystal binding of RMF induces movement of the 30S head domain away from the rest of the ribosome, presumably so they would more easily form dimers (PubMed:22605777). Also involved in protection against heat stress, but this role is not dependent on the maintenance of ribosome dimers (PubMed:15278243).</text>
</comment>
<comment type="subunit">
    <text evidence="3 4 9 10">Associates exclusively with 100S ribosomes (PubMed:12473202, PubMed:15066119, PubMed:2181444). Contacts 16S rRNA, might contact ribosomal protein S18 (PubMed:22605777).</text>
</comment>
<comment type="subcellular location">
    <subcellularLocation>
        <location evidence="17">Cytoplasm</location>
    </subcellularLocation>
</comment>
<comment type="induction">
    <text evidence="1 2 13">Induced during stationary growth phase (PubMed:8440252). Requires ppGpp for translation (PubMed:11532026).</text>
</comment>
<comment type="disruption phenotype">
    <text evidence="6 11 13">Non-essential gene, 100S ribosome dimers are not formed, decreased cell viability during stationary phase (PubMed:8440252). A quadruple raiA-hpf-rmf-sra knockout strain is significantly outcompeted by wild-type after 4 days growth (PubMed:17277072). Very high sensitivity to aminoglycoside antiobiotic gentamicin in stationary phase cultures (PubMed:26324267).</text>
</comment>
<comment type="miscellaneous">
    <text evidence="18">When cells are transferred to rich nutritious culture medium, RMF is quickly released from 100S ribosomes, which dissociate into 70S ribosomes (PubMed:12473202). It indicates that this interconversion is a major system regulating translation activity during the transition of growth phases.</text>
</comment>
<comment type="similarity">
    <text evidence="1">Belongs to the ribosome modulation factor family.</text>
</comment>
<comment type="sequence caution" evidence="17">
    <conflict type="frameshift">
        <sequence resource="EMBL" id="J03186"/>
    </conflict>
</comment>
<name>RMF_ECOLI</name>
<gene>
    <name evidence="1 15" type="primary">rmf</name>
    <name type="ordered locus">b0953</name>
    <name type="ordered locus">JW0936</name>
</gene>
<evidence type="ECO:0000255" key="1">
    <source>
        <dbReference type="HAMAP-Rule" id="MF_00919"/>
    </source>
</evidence>
<evidence type="ECO:0000269" key="2">
    <source>
    </source>
</evidence>
<evidence type="ECO:0000269" key="3">
    <source>
    </source>
</evidence>
<evidence type="ECO:0000269" key="4">
    <source>
    </source>
</evidence>
<evidence type="ECO:0000269" key="5">
    <source>
    </source>
</evidence>
<evidence type="ECO:0000269" key="6">
    <source>
    </source>
</evidence>
<evidence type="ECO:0000269" key="7">
    <source>
    </source>
</evidence>
<evidence type="ECO:0000269" key="8">
    <source>
    </source>
</evidence>
<evidence type="ECO:0000269" key="9">
    <source>
    </source>
</evidence>
<evidence type="ECO:0000269" key="10">
    <source>
    </source>
</evidence>
<evidence type="ECO:0000269" key="11">
    <source>
    </source>
</evidence>
<evidence type="ECO:0000269" key="12">
    <source>
    </source>
</evidence>
<evidence type="ECO:0000269" key="13">
    <source>
    </source>
</evidence>
<evidence type="ECO:0000269" key="14">
    <source>
    </source>
</evidence>
<evidence type="ECO:0000303" key="15">
    <source>
    </source>
</evidence>
<evidence type="ECO:0000303" key="16">
    <source>
    </source>
</evidence>
<evidence type="ECO:0000305" key="17"/>
<evidence type="ECO:0000305" key="18">
    <source>
    </source>
</evidence>
<evidence type="ECO:0007829" key="19">
    <source>
        <dbReference type="PDB" id="4V8G"/>
    </source>
</evidence>
<sequence>MKRQKRDRLERAHQRGYQAGIAGRSKEMCPYQTLNQRSQWLGGWREAMADRVVMA</sequence>
<accession>P0AFW2</accession>
<accession>P22986</accession>
<accession>P77441</accession>
<feature type="chain" id="PRO_0000097363" description="Ribosome modulation factor">
    <location>
        <begin position="1"/>
        <end position="55"/>
    </location>
</feature>
<feature type="sequence conflict" description="In Ref. 6; AA sequence." evidence="17" ref="6">
    <original>R</original>
    <variation>I</variation>
    <location>
        <position position="3"/>
    </location>
</feature>
<feature type="sequence conflict" description="In Ref. 6; AA sequence." evidence="17" ref="6">
    <original>S</original>
    <variation>V</variation>
    <location>
        <position position="25"/>
    </location>
</feature>
<feature type="sequence conflict" description="In Ref. 1; CAA49706." evidence="17" ref="1">
    <original>T</original>
    <variation>S</variation>
    <location>
        <position position="33"/>
    </location>
</feature>
<feature type="helix" evidence="19">
    <location>
        <begin position="6"/>
        <end position="20"/>
    </location>
</feature>
<feature type="strand" evidence="19">
    <location>
        <begin position="21"/>
        <end position="24"/>
    </location>
</feature>
<feature type="strand" evidence="19">
    <location>
        <begin position="32"/>
        <end position="34"/>
    </location>
</feature>
<feature type="helix" evidence="19">
    <location>
        <begin position="35"/>
        <end position="49"/>
    </location>
</feature>
<feature type="turn" evidence="19">
    <location>
        <begin position="50"/>
        <end position="52"/>
    </location>
</feature>
<reference key="1">
    <citation type="journal article" date="1993" name="EMBO J.">
        <title>Regulation of the Escherichia coli rmf gene encoding the ribosome modulation factor: growth phase- and growth rate-dependent control.</title>
        <authorList>
            <person name="Yamagishi M."/>
            <person name="Matsushima H."/>
            <person name="Wada A."/>
            <person name="Sakagami M."/>
            <person name="Fujita N."/>
            <person name="Ishihama A."/>
        </authorList>
    </citation>
    <scope>NUCLEOTIDE SEQUENCE [GENOMIC DNA]</scope>
    <scope>FUNCTION</scope>
    <scope>INDUCTION</scope>
    <scope>DISRUPTION PHENOTYPE</scope>
    <source>
        <strain>K12 / W3110 / ATCC 27325 / DSM 5911</strain>
    </source>
</reference>
<reference key="2">
    <citation type="journal article" date="1988" name="J. Biol. Chem.">
        <title>Derived amino acid sequence and identification of active site residues of Escherichia coli beta-hydroxydecanoyl thioester dehydrase.</title>
        <authorList>
            <person name="Cronan J.E. Jr."/>
            <person name="Li W.-B."/>
            <person name="Coleman R."/>
            <person name="Narasimhan M."/>
            <person name="de Mendoza D."/>
            <person name="Schwab J.M."/>
        </authorList>
    </citation>
    <scope>NUCLEOTIDE SEQUENCE [GENOMIC DNA]</scope>
    <source>
        <strain>K12</strain>
    </source>
</reference>
<reference key="3">
    <citation type="journal article" date="1996" name="DNA Res.">
        <title>A 718-kb DNA sequence of the Escherichia coli K-12 genome corresponding to the 12.7-28.0 min region on the linkage map.</title>
        <authorList>
            <person name="Oshima T."/>
            <person name="Aiba H."/>
            <person name="Baba T."/>
            <person name="Fujita K."/>
            <person name="Hayashi K."/>
            <person name="Honjo A."/>
            <person name="Ikemoto K."/>
            <person name="Inada T."/>
            <person name="Itoh T."/>
            <person name="Kajihara M."/>
            <person name="Kanai K."/>
            <person name="Kashimoto K."/>
            <person name="Kimura S."/>
            <person name="Kitagawa M."/>
            <person name="Makino K."/>
            <person name="Masuda S."/>
            <person name="Miki T."/>
            <person name="Mizobuchi K."/>
            <person name="Mori H."/>
            <person name="Motomura K."/>
            <person name="Nakamura Y."/>
            <person name="Nashimoto H."/>
            <person name="Nishio Y."/>
            <person name="Saito N."/>
            <person name="Sampei G."/>
            <person name="Seki Y."/>
            <person name="Tagami H."/>
            <person name="Takemoto K."/>
            <person name="Wada C."/>
            <person name="Yamamoto Y."/>
            <person name="Yano M."/>
            <person name="Horiuchi T."/>
        </authorList>
    </citation>
    <scope>NUCLEOTIDE SEQUENCE [LARGE SCALE GENOMIC DNA]</scope>
    <source>
        <strain>K12 / W3110 / ATCC 27325 / DSM 5911</strain>
    </source>
</reference>
<reference key="4">
    <citation type="journal article" date="1997" name="Science">
        <title>The complete genome sequence of Escherichia coli K-12.</title>
        <authorList>
            <person name="Blattner F.R."/>
            <person name="Plunkett G. III"/>
            <person name="Bloch C.A."/>
            <person name="Perna N.T."/>
            <person name="Burland V."/>
            <person name="Riley M."/>
            <person name="Collado-Vides J."/>
            <person name="Glasner J.D."/>
            <person name="Rode C.K."/>
            <person name="Mayhew G.F."/>
            <person name="Gregor J."/>
            <person name="Davis N.W."/>
            <person name="Kirkpatrick H.A."/>
            <person name="Goeden M.A."/>
            <person name="Rose D.J."/>
            <person name="Mau B."/>
            <person name="Shao Y."/>
        </authorList>
    </citation>
    <scope>NUCLEOTIDE SEQUENCE [LARGE SCALE GENOMIC DNA]</scope>
    <source>
        <strain>K12 / MG1655 / ATCC 47076</strain>
    </source>
</reference>
<reference key="5">
    <citation type="journal article" date="2006" name="Mol. Syst. Biol.">
        <title>Highly accurate genome sequences of Escherichia coli K-12 strains MG1655 and W3110.</title>
        <authorList>
            <person name="Hayashi K."/>
            <person name="Morooka N."/>
            <person name="Yamamoto Y."/>
            <person name="Fujita K."/>
            <person name="Isono K."/>
            <person name="Choi S."/>
            <person name="Ohtsubo E."/>
            <person name="Baba T."/>
            <person name="Wanner B.L."/>
            <person name="Mori H."/>
            <person name="Horiuchi T."/>
        </authorList>
    </citation>
    <scope>NUCLEOTIDE SEQUENCE [LARGE SCALE GENOMIC DNA]</scope>
    <source>
        <strain>K12 / W3110 / ATCC 27325 / DSM 5911</strain>
    </source>
</reference>
<reference key="6">
    <citation type="journal article" date="1990" name="Proc. Natl. Acad. Sci. U.S.A.">
        <title>Structure and probable genetic location of a 'ribosome modulation factor' associated with 100S ribosomes in stationary-phase Escherichia coli cells.</title>
        <authorList>
            <person name="Wada A."/>
            <person name="Yamazaki Y."/>
            <person name="Fujita N."/>
            <person name="Ishihama A."/>
        </authorList>
    </citation>
    <scope>PROTEIN SEQUENCE OF 1-30</scope>
    <scope>INTERACTION WITH 100S RIBOSOMES</scope>
    <source>
        <strain>K12 / W3110 / ATCC 27325 / DSM 5911</strain>
    </source>
</reference>
<reference key="7">
    <citation type="journal article" date="1995" name="Biochem. Biophys. Res. Commun.">
        <title>Ribosome modulation factor: stationary growth phase-specific inhibitor of ribosome functions from Escherichia coli.</title>
        <authorList>
            <person name="Wada A."/>
            <person name="Igarashi K."/>
            <person name="Yoshimura S."/>
            <person name="Aimoto S."/>
            <person name="Ishihama A."/>
        </authorList>
    </citation>
    <scope>FUNCTION</scope>
    <source>
        <strain>K12 / W3350 / ATCC 27020</strain>
    </source>
</reference>
<reference key="8">
    <citation type="journal article" date="2001" name="Genes Cells">
        <title>Expression of ribosome modulation factor (RMF) in Escherichia coli requires ppGpp.</title>
        <authorList>
            <person name="Izutsu K."/>
            <person name="Wada A."/>
            <person name="Wada C."/>
        </authorList>
    </citation>
    <scope>INDUCTION</scope>
    <source>
        <strain>K12</strain>
    </source>
</reference>
<reference key="9">
    <citation type="journal article" date="2002" name="J. Biochem.">
        <title>The ribosome modulation factor (RMF) binding site on the 100S ribosome of Escherichia coli.</title>
        <authorList>
            <person name="Yoshida H."/>
            <person name="Maki Y."/>
            <person name="Kato H."/>
            <person name="Fujisawa H."/>
            <person name="Izutsu K."/>
            <person name="Wada C."/>
            <person name="Wada A."/>
        </authorList>
    </citation>
    <scope>FUNCTION</scope>
    <scope>INTERACTION WITH RIBOSOME</scope>
    <source>
        <strain>K12</strain>
    </source>
</reference>
<reference key="10">
    <citation type="journal article" date="2004" name="Arch. Microbiol.">
        <title>Ribosome modulation factor protects Escherichia coli during heat stress, but this may not be dependent on ribosome dimerisation.</title>
        <authorList>
            <person name="Niven G.W."/>
        </authorList>
    </citation>
    <scope>FUNCTION IN PROTECTION DURING HEAT STRESS</scope>
</reference>
<reference key="11">
    <citation type="journal article" date="2004" name="Genes Cells">
        <title>RMF inactivates ribosomes by covering the peptidyl transferase centre and entrance of peptide exit tunnel.</title>
        <authorList>
            <person name="Yoshida H."/>
            <person name="Yamamoto H."/>
            <person name="Uchiumi T."/>
            <person name="Wada A."/>
        </authorList>
    </citation>
    <scope>FUNCTION</scope>
    <scope>INTERACTION WITH RIBOSOME</scope>
    <source>
        <strain>K12 / W3110 / ATCC 27325 / DSM 5911</strain>
    </source>
</reference>
<reference key="12">
    <citation type="journal article" date="2007" name="J. Bacteriol.">
        <title>Essentiality of ribosomal and transcription antitermination proteins analyzed by systematic gene replacement in Escherichia coli.</title>
        <authorList>
            <person name="Bubunenko M."/>
            <person name="Baker T."/>
            <person name="Court D.L."/>
        </authorList>
    </citation>
    <scope>DISRUPTION PHENOTYPE</scope>
    <source>
        <strain>K12 / W3110 / ATCC 27325 / DSM 5911</strain>
    </source>
</reference>
<reference key="13">
    <citation type="journal article" date="2008" name="J. Biochem.">
        <title>Role of HPF (hibernation promoting factor) in translational activity in Escherichia coli.</title>
        <authorList>
            <person name="Ueta M."/>
            <person name="Ohniwa R.L."/>
            <person name="Yoshida H."/>
            <person name="Maki Y."/>
            <person name="Wada C."/>
            <person name="Wada A."/>
        </authorList>
    </citation>
    <scope>FUNCTION</scope>
    <source>
        <strain>K12 / W3110 / ATCC 27325 / DSM 5911</strain>
    </source>
</reference>
<reference key="14">
    <citation type="journal article" date="2009" name="Genes Cells">
        <title>Activities of Escherichia coli ribosomes in IF3 and RMF change to prepare 100S ribosome formation on entering the stationary growth phase.</title>
        <authorList>
            <person name="Yoshida H."/>
            <person name="Ueta M."/>
            <person name="Maki Y."/>
            <person name="Sakai A."/>
            <person name="Wada A."/>
        </authorList>
    </citation>
    <scope>FUNCTION</scope>
</reference>
<reference key="15">
    <citation type="journal article" date="2015" name="Antimicrob. Agents Chemother.">
        <title>Ribosome hibernation facilitates tolerance of stationary-phase bacteria to aminoglycosides.</title>
        <authorList>
            <person name="McKay S.L."/>
            <person name="Portnoy D.A."/>
        </authorList>
    </citation>
    <scope>DISRUPTION PHENOTYPE</scope>
    <source>
        <strain>K12 / BW25113</strain>
    </source>
</reference>
<reference key="16">
    <citation type="journal article" date="2012" name="Science">
        <title>How hibernation factors RMF, HPF, and YfiA turn off protein synthesis.</title>
        <authorList>
            <person name="Polikanov Y.S."/>
            <person name="Blaha G.M."/>
            <person name="Steitz T.A."/>
        </authorList>
    </citation>
    <scope>X-RAY CRYSTALLOGRAPHY (3.00 ANGSTROMS) BOUND TO THE T.THERMOPHILUS 70S RIBOSOME</scope>
    <scope>FUNCTION</scope>
    <scope>SUBUNIT</scope>
    <scope>RRNA-BINDING</scope>
</reference>
<dbReference type="EMBL" id="X70111">
    <property type="protein sequence ID" value="CAA49706.1"/>
    <property type="molecule type" value="Genomic_DNA"/>
</dbReference>
<dbReference type="EMBL" id="J03186">
    <property type="status" value="NOT_ANNOTATED_CDS"/>
    <property type="molecule type" value="Genomic_DNA"/>
</dbReference>
<dbReference type="EMBL" id="U00096">
    <property type="protein sequence ID" value="AAC74039.1"/>
    <property type="molecule type" value="Genomic_DNA"/>
</dbReference>
<dbReference type="EMBL" id="AP009048">
    <property type="protein sequence ID" value="BAA35711.1"/>
    <property type="molecule type" value="Genomic_DNA"/>
</dbReference>
<dbReference type="PIR" id="H64835">
    <property type="entry name" value="H64835"/>
</dbReference>
<dbReference type="RefSeq" id="NP_415473.1">
    <property type="nucleotide sequence ID" value="NC_000913.3"/>
</dbReference>
<dbReference type="RefSeq" id="WP_000828648.1">
    <property type="nucleotide sequence ID" value="NZ_STEB01000006.1"/>
</dbReference>
<dbReference type="PDB" id="4V8G">
    <property type="method" value="X-ray"/>
    <property type="resolution" value="3.00 A"/>
    <property type="chains" value="AV/CV=1-55"/>
</dbReference>
<dbReference type="PDB" id="6H4N">
    <property type="method" value="EM"/>
    <property type="resolution" value="3.00 A"/>
    <property type="chains" value="v=1-55"/>
</dbReference>
<dbReference type="PDB" id="6H58">
    <property type="method" value="EM"/>
    <property type="resolution" value="7.90 A"/>
    <property type="chains" value="v/vv=1-55"/>
</dbReference>
<dbReference type="PDBsum" id="4V8G"/>
<dbReference type="PDBsum" id="6H4N"/>
<dbReference type="PDBsum" id="6H58"/>
<dbReference type="EMDB" id="EMD-0137"/>
<dbReference type="EMDB" id="EMD-0139"/>
<dbReference type="SMR" id="P0AFW2"/>
<dbReference type="BioGRID" id="4260019">
    <property type="interactions" value="279"/>
</dbReference>
<dbReference type="BioGRID" id="849941">
    <property type="interactions" value="2"/>
</dbReference>
<dbReference type="DIP" id="DIP-48260N"/>
<dbReference type="FunCoup" id="P0AFW2">
    <property type="interactions" value="131"/>
</dbReference>
<dbReference type="IntAct" id="P0AFW2">
    <property type="interactions" value="4"/>
</dbReference>
<dbReference type="STRING" id="511145.b0953"/>
<dbReference type="jPOST" id="P0AFW2"/>
<dbReference type="PaxDb" id="511145-b0953"/>
<dbReference type="EnsemblBacteria" id="AAC74039">
    <property type="protein sequence ID" value="AAC74039"/>
    <property type="gene ID" value="b0953"/>
</dbReference>
<dbReference type="GeneID" id="93776461"/>
<dbReference type="GeneID" id="945567"/>
<dbReference type="KEGG" id="ecj:JW0936"/>
<dbReference type="KEGG" id="eco:b0953"/>
<dbReference type="KEGG" id="ecoc:C3026_05830"/>
<dbReference type="PATRIC" id="fig|1411691.4.peg.1321"/>
<dbReference type="EchoBASE" id="EB4298"/>
<dbReference type="eggNOG" id="COG3130">
    <property type="taxonomic scope" value="Bacteria"/>
</dbReference>
<dbReference type="HOGENOM" id="CLU_203350_0_0_6"/>
<dbReference type="InParanoid" id="P0AFW2"/>
<dbReference type="OMA" id="EACPYQQ"/>
<dbReference type="OrthoDB" id="5917763at2"/>
<dbReference type="PhylomeDB" id="P0AFW2"/>
<dbReference type="BioCyc" id="EcoCyc:EG50004-MONOMER"/>
<dbReference type="PRO" id="PR:P0AFW2"/>
<dbReference type="Proteomes" id="UP000000625">
    <property type="component" value="Chromosome"/>
</dbReference>
<dbReference type="GO" id="GO:0005737">
    <property type="term" value="C:cytoplasm"/>
    <property type="evidence" value="ECO:0000314"/>
    <property type="project" value="EcoCyc"/>
</dbReference>
<dbReference type="GO" id="GO:0043024">
    <property type="term" value="F:ribosomal small subunit binding"/>
    <property type="evidence" value="ECO:0000314"/>
    <property type="project" value="EcoCyc"/>
</dbReference>
<dbReference type="GO" id="GO:0043022">
    <property type="term" value="F:ribosome binding"/>
    <property type="evidence" value="ECO:0000314"/>
    <property type="project" value="EcoCyc"/>
</dbReference>
<dbReference type="GO" id="GO:0019843">
    <property type="term" value="F:rRNA binding"/>
    <property type="evidence" value="ECO:0007669"/>
    <property type="project" value="UniProtKB-KW"/>
</dbReference>
<dbReference type="GO" id="GO:0033554">
    <property type="term" value="P:cellular response to stress"/>
    <property type="evidence" value="ECO:0000270"/>
    <property type="project" value="EcoCyc"/>
</dbReference>
<dbReference type="GO" id="GO:0022611">
    <property type="term" value="P:dormancy process"/>
    <property type="evidence" value="ECO:0000314"/>
    <property type="project" value="EcoCyc"/>
</dbReference>
<dbReference type="GO" id="GO:0032055">
    <property type="term" value="P:negative regulation of translation in response to stress"/>
    <property type="evidence" value="ECO:0000314"/>
    <property type="project" value="EcoCyc"/>
</dbReference>
<dbReference type="FunFam" id="1.10.10.620:FF:000001">
    <property type="entry name" value="Ribosome modulation factor"/>
    <property type="match status" value="1"/>
</dbReference>
<dbReference type="Gene3D" id="1.10.10.620">
    <property type="entry name" value="ribosome modulation factor like domain"/>
    <property type="match status" value="1"/>
</dbReference>
<dbReference type="HAMAP" id="MF_00919">
    <property type="entry name" value="RMF"/>
    <property type="match status" value="1"/>
</dbReference>
<dbReference type="InterPro" id="IPR007040">
    <property type="entry name" value="Ribosome_modulation_factor"/>
</dbReference>
<dbReference type="InterPro" id="IPR023200">
    <property type="entry name" value="RMF_sf"/>
</dbReference>
<dbReference type="NCBIfam" id="NF011162">
    <property type="entry name" value="PRK14563.1"/>
    <property type="match status" value="1"/>
</dbReference>
<dbReference type="NCBIfam" id="NF041886">
    <property type="entry name" value="Rmf_CrpP_fam"/>
    <property type="match status" value="1"/>
</dbReference>
<dbReference type="Pfam" id="PF04957">
    <property type="entry name" value="RMF"/>
    <property type="match status" value="1"/>
</dbReference>
<protein>
    <recommendedName>
        <fullName evidence="1 15">Ribosome modulation factor</fullName>
        <shortName evidence="1">RMF</shortName>
    </recommendedName>
    <alternativeName>
        <fullName evidence="16">Hibernation factor RMF</fullName>
    </alternativeName>
    <alternativeName>
        <fullName>Protein E</fullName>
    </alternativeName>
</protein>
<proteinExistence type="evidence at protein level"/>
<organism>
    <name type="scientific">Escherichia coli (strain K12)</name>
    <dbReference type="NCBI Taxonomy" id="83333"/>
    <lineage>
        <taxon>Bacteria</taxon>
        <taxon>Pseudomonadati</taxon>
        <taxon>Pseudomonadota</taxon>
        <taxon>Gammaproteobacteria</taxon>
        <taxon>Enterobacterales</taxon>
        <taxon>Enterobacteriaceae</taxon>
        <taxon>Escherichia</taxon>
    </lineage>
</organism>